<sequence length="377" mass="42051">MCDEDETTALVCDNGSGLVKAGFAGDDAPRAVFPSIVGRPRHQGVMVGMGQKDSYVGDEAQSKRGILTLKYPIEHGIITNWDDMEKIWHHTFYNELRVAPEEHPTLLTEAPLNPKANREKMTQIMFETFNVPAMYVAIQAVLSLYASGRTTGIVLDSGDGVTHNVPIYEGYALPHAIMRLDLAGRDLTDYLMKILTERGYSFVTTAEREIVRDIKEKLCYVALDFENEMATAASSSSLEKSYELPDGQVITIGNERFRCPETLFQPSFIGMESAGIHETTYNSIMKCDIDIRKDLYANNVMSGGTTMYPGIADRMQKEITALAPSTMKIKIIAPPERKYSVWIGGSILASLSTFQQMWITKQEYDEAGPSIVHRKCF</sequence>
<accession>P68134</accession>
<accession>P02568</accession>
<accession>P99020</accession>
<gene>
    <name type="primary">Acta1</name>
    <name type="synonym">Acta</name>
</gene>
<dbReference type="EC" id="3.6.4.-" evidence="5"/>
<dbReference type="EMBL" id="M12866">
    <property type="protein sequence ID" value="AAA37164.1"/>
    <property type="molecule type" value="mRNA"/>
</dbReference>
<dbReference type="EMBL" id="M12347">
    <property type="protein sequence ID" value="AAA37141.1"/>
    <property type="molecule type" value="Genomic_DNA"/>
</dbReference>
<dbReference type="EMBL" id="BC014877">
    <property type="protein sequence ID" value="AAH14877.1"/>
    <property type="molecule type" value="mRNA"/>
</dbReference>
<dbReference type="CCDS" id="CCDS22764.1"/>
<dbReference type="PIR" id="A24904">
    <property type="entry name" value="A24904"/>
</dbReference>
<dbReference type="RefSeq" id="NP_001258970.1">
    <property type="nucleotide sequence ID" value="NM_001272041.1"/>
</dbReference>
<dbReference type="RefSeq" id="NP_033736.1">
    <property type="nucleotide sequence ID" value="NM_009606.3"/>
</dbReference>
<dbReference type="PDB" id="4B1U">
    <property type="method" value="X-ray"/>
    <property type="resolution" value="2.00 A"/>
    <property type="chains" value="B=2-377"/>
</dbReference>
<dbReference type="PDB" id="6KLL">
    <property type="method" value="EM"/>
    <property type="resolution" value="3.00 A"/>
    <property type="chains" value="A/B/C/D=3-377"/>
</dbReference>
<dbReference type="PDB" id="6KLN">
    <property type="method" value="EM"/>
    <property type="resolution" value="3.40 A"/>
    <property type="chains" value="A/B/C/D=3-377"/>
</dbReference>
<dbReference type="PDB" id="7AQK">
    <property type="method" value="EM"/>
    <property type="resolution" value="9.00 A"/>
    <property type="chains" value="h/i/j/k/l/m/n/o/p/q/r=1-377"/>
</dbReference>
<dbReference type="PDB" id="7NEP">
    <property type="method" value="EM"/>
    <property type="resolution" value="10.20 A"/>
    <property type="chains" value="A/B/C/D/E/F/G/H/I/J/K=4-377"/>
</dbReference>
<dbReference type="PDB" id="7QIM">
    <property type="method" value="EM"/>
    <property type="resolution" value="4.50 A"/>
    <property type="chains" value="A/B/C/D/E=1-377"/>
</dbReference>
<dbReference type="PDB" id="7QIN">
    <property type="method" value="EM"/>
    <property type="resolution" value="6.60 A"/>
    <property type="chains" value="A/B/C/D/E=7-377"/>
</dbReference>
<dbReference type="PDBsum" id="4B1U"/>
<dbReference type="PDBsum" id="6KLL"/>
<dbReference type="PDBsum" id="6KLN"/>
<dbReference type="PDBsum" id="7AQK"/>
<dbReference type="PDBsum" id="7NEP"/>
<dbReference type="PDBsum" id="7QIM"/>
<dbReference type="PDBsum" id="7QIN"/>
<dbReference type="EMDB" id="EMD-0711"/>
<dbReference type="EMDB" id="EMD-0712"/>
<dbReference type="EMDB" id="EMD-11869"/>
<dbReference type="EMDB" id="EMD-12289"/>
<dbReference type="EMDB" id="EMD-13990"/>
<dbReference type="EMDB" id="EMD-13991"/>
<dbReference type="SMR" id="P68134"/>
<dbReference type="BioGRID" id="197943">
    <property type="interactions" value="51"/>
</dbReference>
<dbReference type="FunCoup" id="P68134">
    <property type="interactions" value="332"/>
</dbReference>
<dbReference type="IntAct" id="P68134">
    <property type="interactions" value="26"/>
</dbReference>
<dbReference type="MINT" id="P68134"/>
<dbReference type="STRING" id="10090.ENSMUSP00000034453"/>
<dbReference type="GlyGen" id="P68134">
    <property type="glycosylation" value="3 sites, 1 O-linked glycan (3 sites)"/>
</dbReference>
<dbReference type="iPTMnet" id="P68134"/>
<dbReference type="PhosphoSitePlus" id="P68134"/>
<dbReference type="SwissPalm" id="P68134"/>
<dbReference type="jPOST" id="P68134"/>
<dbReference type="PaxDb" id="10090-ENSMUSP00000034453"/>
<dbReference type="PeptideAtlas" id="P68134"/>
<dbReference type="ProteomicsDB" id="285545"/>
<dbReference type="Pumba" id="P68134"/>
<dbReference type="Antibodypedia" id="3508">
    <property type="antibodies" value="1328 antibodies from 46 providers"/>
</dbReference>
<dbReference type="DNASU" id="11459"/>
<dbReference type="Ensembl" id="ENSMUST00000034453.6">
    <property type="protein sequence ID" value="ENSMUSP00000034453.5"/>
    <property type="gene ID" value="ENSMUSG00000031972.6"/>
</dbReference>
<dbReference type="GeneID" id="11459"/>
<dbReference type="KEGG" id="mmu:11459"/>
<dbReference type="UCSC" id="uc009nwr.2">
    <property type="organism name" value="mouse"/>
</dbReference>
<dbReference type="AGR" id="MGI:87902"/>
<dbReference type="CTD" id="58"/>
<dbReference type="MGI" id="MGI:87902">
    <property type="gene designation" value="Acta1"/>
</dbReference>
<dbReference type="VEuPathDB" id="HostDB:ENSMUSG00000031972"/>
<dbReference type="eggNOG" id="KOG0676">
    <property type="taxonomic scope" value="Eukaryota"/>
</dbReference>
<dbReference type="GeneTree" id="ENSGT00940000156048"/>
<dbReference type="HOGENOM" id="CLU_027965_0_2_1"/>
<dbReference type="InParanoid" id="P68134"/>
<dbReference type="OMA" id="EDAPRCC"/>
<dbReference type="OrthoDB" id="9545632at2759"/>
<dbReference type="PhylomeDB" id="P68134"/>
<dbReference type="TreeFam" id="TF354237"/>
<dbReference type="Reactome" id="R-MMU-390522">
    <property type="pathway name" value="Striated Muscle Contraction"/>
</dbReference>
<dbReference type="Reactome" id="R-MMU-9913351">
    <property type="pathway name" value="Formation of the dystrophin-glycoprotein complex (DGC)"/>
</dbReference>
<dbReference type="BioGRID-ORCS" id="11459">
    <property type="hits" value="3 hits in 77 CRISPR screens"/>
</dbReference>
<dbReference type="ChiTaRS" id="Acta1">
    <property type="organism name" value="mouse"/>
</dbReference>
<dbReference type="EvolutionaryTrace" id="P68134"/>
<dbReference type="PRO" id="PR:P68134"/>
<dbReference type="Proteomes" id="UP000000589">
    <property type="component" value="Chromosome 8"/>
</dbReference>
<dbReference type="RNAct" id="P68134">
    <property type="molecule type" value="protein"/>
</dbReference>
<dbReference type="Bgee" id="ENSMUSG00000031972">
    <property type="expression patterns" value="Expressed in tarsal region and 199 other cell types or tissues"/>
</dbReference>
<dbReference type="ExpressionAtlas" id="P68134">
    <property type="expression patterns" value="baseline and differential"/>
</dbReference>
<dbReference type="GO" id="GO:0005884">
    <property type="term" value="C:actin filament"/>
    <property type="evidence" value="ECO:0000250"/>
    <property type="project" value="UniProtKB"/>
</dbReference>
<dbReference type="GO" id="GO:0044297">
    <property type="term" value="C:cell body"/>
    <property type="evidence" value="ECO:0000250"/>
    <property type="project" value="AgBase"/>
</dbReference>
<dbReference type="GO" id="GO:0005737">
    <property type="term" value="C:cytoplasm"/>
    <property type="evidence" value="ECO:0000250"/>
    <property type="project" value="AgBase"/>
</dbReference>
<dbReference type="GO" id="GO:0030175">
    <property type="term" value="C:filopodium"/>
    <property type="evidence" value="ECO:0000250"/>
    <property type="project" value="AgBase"/>
</dbReference>
<dbReference type="GO" id="GO:0030027">
    <property type="term" value="C:lamellipodium"/>
    <property type="evidence" value="ECO:0000250"/>
    <property type="project" value="AgBase"/>
</dbReference>
<dbReference type="GO" id="GO:0032991">
    <property type="term" value="C:protein-containing complex"/>
    <property type="evidence" value="ECO:0000266"/>
    <property type="project" value="MGI"/>
</dbReference>
<dbReference type="GO" id="GO:0001725">
    <property type="term" value="C:stress fiber"/>
    <property type="evidence" value="ECO:0000250"/>
    <property type="project" value="UniProtKB"/>
</dbReference>
<dbReference type="GO" id="GO:0005865">
    <property type="term" value="C:striated muscle thin filament"/>
    <property type="evidence" value="ECO:0000304"/>
    <property type="project" value="UniProtKB"/>
</dbReference>
<dbReference type="GO" id="GO:0005524">
    <property type="term" value="F:ATP binding"/>
    <property type="evidence" value="ECO:0007669"/>
    <property type="project" value="UniProtKB-KW"/>
</dbReference>
<dbReference type="GO" id="GO:0016787">
    <property type="term" value="F:hydrolase activity"/>
    <property type="evidence" value="ECO:0007669"/>
    <property type="project" value="UniProtKB-KW"/>
</dbReference>
<dbReference type="GO" id="GO:0090131">
    <property type="term" value="P:mesenchyme migration"/>
    <property type="evidence" value="ECO:0000250"/>
    <property type="project" value="AgBase"/>
</dbReference>
<dbReference type="GO" id="GO:0010628">
    <property type="term" value="P:positive regulation of gene expression"/>
    <property type="evidence" value="ECO:0000250"/>
    <property type="project" value="AgBase"/>
</dbReference>
<dbReference type="GO" id="GO:0048741">
    <property type="term" value="P:skeletal muscle fiber development"/>
    <property type="evidence" value="ECO:0000314"/>
    <property type="project" value="UniProtKB"/>
</dbReference>
<dbReference type="GO" id="GO:0030240">
    <property type="term" value="P:skeletal muscle thin filament assembly"/>
    <property type="evidence" value="ECO:0000250"/>
    <property type="project" value="UniProtKB"/>
</dbReference>
<dbReference type="CDD" id="cd10224">
    <property type="entry name" value="ASKHA_NBD_actin"/>
    <property type="match status" value="1"/>
</dbReference>
<dbReference type="FunFam" id="3.30.420.40:FF:000131">
    <property type="entry name" value="Actin, alpha skeletal muscle"/>
    <property type="match status" value="1"/>
</dbReference>
<dbReference type="FunFam" id="3.30.420.40:FF:000291">
    <property type="entry name" value="Actin, alpha skeletal muscle"/>
    <property type="match status" value="1"/>
</dbReference>
<dbReference type="FunFam" id="3.90.640.10:FF:000047">
    <property type="entry name" value="Actin, alpha skeletal muscle"/>
    <property type="match status" value="1"/>
</dbReference>
<dbReference type="FunFam" id="3.30.420.40:FF:000058">
    <property type="entry name" value="Putative actin-related protein 5"/>
    <property type="match status" value="1"/>
</dbReference>
<dbReference type="Gene3D" id="3.30.420.40">
    <property type="match status" value="2"/>
</dbReference>
<dbReference type="Gene3D" id="3.90.640.10">
    <property type="entry name" value="Actin, Chain A, domain 4"/>
    <property type="match status" value="1"/>
</dbReference>
<dbReference type="InterPro" id="IPR004000">
    <property type="entry name" value="Actin"/>
</dbReference>
<dbReference type="InterPro" id="IPR020902">
    <property type="entry name" value="Actin/actin-like_CS"/>
</dbReference>
<dbReference type="InterPro" id="IPR004001">
    <property type="entry name" value="Actin_CS"/>
</dbReference>
<dbReference type="InterPro" id="IPR043129">
    <property type="entry name" value="ATPase_NBD"/>
</dbReference>
<dbReference type="PANTHER" id="PTHR11937">
    <property type="entry name" value="ACTIN"/>
    <property type="match status" value="1"/>
</dbReference>
<dbReference type="Pfam" id="PF00022">
    <property type="entry name" value="Actin"/>
    <property type="match status" value="1"/>
</dbReference>
<dbReference type="PRINTS" id="PR00190">
    <property type="entry name" value="ACTIN"/>
</dbReference>
<dbReference type="SMART" id="SM00268">
    <property type="entry name" value="ACTIN"/>
    <property type="match status" value="1"/>
</dbReference>
<dbReference type="SUPFAM" id="SSF53067">
    <property type="entry name" value="Actin-like ATPase domain"/>
    <property type="match status" value="2"/>
</dbReference>
<dbReference type="PROSITE" id="PS00406">
    <property type="entry name" value="ACTINS_1"/>
    <property type="match status" value="1"/>
</dbReference>
<dbReference type="PROSITE" id="PS00432">
    <property type="entry name" value="ACTINS_2"/>
    <property type="match status" value="1"/>
</dbReference>
<dbReference type="PROSITE" id="PS01132">
    <property type="entry name" value="ACTINS_ACT_LIKE"/>
    <property type="match status" value="1"/>
</dbReference>
<protein>
    <recommendedName>
        <fullName>Actin, alpha skeletal muscle</fullName>
        <ecNumber evidence="5">3.6.4.-</ecNumber>
    </recommendedName>
    <alternativeName>
        <fullName>Alpha-actin-1</fullName>
    </alternativeName>
    <component>
        <recommendedName>
            <fullName>Actin, alpha skeletal muscle, intermediate form</fullName>
        </recommendedName>
    </component>
</protein>
<organism>
    <name type="scientific">Mus musculus</name>
    <name type="common">Mouse</name>
    <dbReference type="NCBI Taxonomy" id="10090"/>
    <lineage>
        <taxon>Eukaryota</taxon>
        <taxon>Metazoa</taxon>
        <taxon>Chordata</taxon>
        <taxon>Craniata</taxon>
        <taxon>Vertebrata</taxon>
        <taxon>Euteleostomi</taxon>
        <taxon>Mammalia</taxon>
        <taxon>Eutheria</taxon>
        <taxon>Euarchontoglires</taxon>
        <taxon>Glires</taxon>
        <taxon>Rodentia</taxon>
        <taxon>Myomorpha</taxon>
        <taxon>Muroidea</taxon>
        <taxon>Muridae</taxon>
        <taxon>Murinae</taxon>
        <taxon>Mus</taxon>
        <taxon>Mus</taxon>
    </lineage>
</organism>
<reference key="1">
    <citation type="journal article" date="1986" name="DNA">
        <title>Isolation and characterization of cDNA clones from mouse skeletal muscle actin mRNA.</title>
        <authorList>
            <person name="Leader D.P."/>
            <person name="Gall I."/>
            <person name="Campbell P.C."/>
            <person name="Frischauf A.-M."/>
        </authorList>
    </citation>
    <scope>NUCLEOTIDE SEQUENCE [MRNA]</scope>
</reference>
<reference key="2">
    <citation type="journal article" date="1986" name="Mol. Cell. Biol.">
        <title>The complete sequence of the mouse skeletal alpha-actin gene reveals several conserved and inverted repeat sequences outside of the protein-coding region.</title>
        <authorList>
            <person name="Hu M.C.-T."/>
            <person name="Sharp S.B."/>
            <person name="Davidson N."/>
        </authorList>
    </citation>
    <scope>NUCLEOTIDE SEQUENCE [GENOMIC DNA]</scope>
</reference>
<reference key="3">
    <citation type="journal article" date="2004" name="Genome Res.">
        <title>The status, quality, and expansion of the NIH full-length cDNA project: the Mammalian Gene Collection (MGC).</title>
        <authorList>
            <consortium name="The MGC Project Team"/>
        </authorList>
    </citation>
    <scope>NUCLEOTIDE SEQUENCE [LARGE SCALE MRNA]</scope>
    <source>
        <tissue>Mammary tumor</tissue>
    </source>
</reference>
<reference key="4">
    <citation type="journal article" date="2013" name="Mol. Cell">
        <title>MsrB1 and MICALs regulate actin assembly and macrophage function via reversible stereoselective methionine oxidation.</title>
        <authorList>
            <person name="Lee B.C."/>
            <person name="Peterfi Z."/>
            <person name="Hoffmann F.W."/>
            <person name="Moore R.E."/>
            <person name="Kaya A."/>
            <person name="Avanesov A."/>
            <person name="Tarrago L."/>
            <person name="Zhou Y."/>
            <person name="Weerapana E."/>
            <person name="Fomenko D.E."/>
            <person name="Hoffmann P.R."/>
            <person name="Gladyshev V.N."/>
        </authorList>
    </citation>
    <scope>OXIDATION AT MET-46 AND MET-49</scope>
    <scope>DEOXIDATION AT MET-46 AND MET-49</scope>
</reference>
<reference key="5">
    <citation type="journal article" date="2022" name="Science">
        <title>Actin maturation requires the ACTMAP/C19orf54 protease.</title>
        <authorList>
            <person name="Haahr P."/>
            <person name="Galli R.A."/>
            <person name="van den Hengel L.G."/>
            <person name="Bleijerveld O.B."/>
            <person name="Kazokaite-Adomaitiene J."/>
            <person name="Song J.Y."/>
            <person name="Kroese L.J."/>
            <person name="Krimpenfort P."/>
            <person name="Baltissen M.P."/>
            <person name="Vermeulen M."/>
            <person name="Ottenheijm C.A.C."/>
            <person name="Brummelkamp T.R."/>
        </authorList>
    </citation>
    <scope>PROTEOLYTIC CLEAVAGE BY ACTMAP</scope>
    <scope>ACETYLATION AT CYS-2</scope>
</reference>
<comment type="function">
    <text>Actins are highly conserved proteins that are involved in various types of cell motility and are ubiquitously expressed in all eukaryotic cells.</text>
</comment>
<comment type="catalytic activity">
    <reaction evidence="5">
        <text>ATP + H2O = ADP + phosphate + H(+)</text>
        <dbReference type="Rhea" id="RHEA:13065"/>
        <dbReference type="ChEBI" id="CHEBI:15377"/>
        <dbReference type="ChEBI" id="CHEBI:15378"/>
        <dbReference type="ChEBI" id="CHEBI:30616"/>
        <dbReference type="ChEBI" id="CHEBI:43474"/>
        <dbReference type="ChEBI" id="CHEBI:456216"/>
    </reaction>
</comment>
<comment type="subunit">
    <text evidence="3 4">Polymerization of globular actin (G-actin) leads to a structural filament (F-actin) in the form of a two-stranded helix. Each actin can bind to 4 others (By similarity). Interacts with alpha-actinin. Identified in a complex composed of ACTA1, COBL, GSN AND TMSB4X (By similarity). Interacts with TTID. Interacts (via its C-terminus) with USP25 (By similarity).</text>
</comment>
<comment type="subcellular location">
    <subcellularLocation>
        <location>Cytoplasm</location>
        <location>Cytoskeleton</location>
    </subcellularLocation>
</comment>
<comment type="PTM">
    <text evidence="7">Oxidation of Met-46 and Met-49 by MICALs (MICAL1, MICAL2 or MICAL3) to form methionine sulfoxide promotes actin filament depolymerization. MICAL1 and MICAL2 produce the (R)-S-oxide form. The (R)-S-oxide form is reverted by MSRB1 and MSRB2, which promotes actin repolymerization.</text>
</comment>
<comment type="PTM">
    <text evidence="3">Monomethylation at Lys-86 (K84me1) regulates actin-myosin interaction and actomyosin-dependent processes. Demethylation by ALKBH4 is required for maintaining actomyosin dynamics supporting normal cleavage furrow ingression during cytokinesis and cell migration.</text>
</comment>
<comment type="PTM">
    <text evidence="3">Methylated at His-75 by SETD3.</text>
</comment>
<comment type="PTM">
    <molecule>Actin, alpha skeletal muscle, intermediate form</molecule>
    <text evidence="8">N-terminal cleavage of acetylated cysteine of intermediate muscle actin by ACTMAP.</text>
</comment>
<comment type="miscellaneous">
    <text>In vertebrates 3 main groups of actin isoforms, alpha, beta and gamma have been identified. The alpha actins are found in muscle tissues and are a major constituent of the contractile apparatus. The beta and gamma actins coexist in most cell types as components of the cytoskeleton and as mediators of internal cell motility.</text>
</comment>
<comment type="similarity">
    <text evidence="9">Belongs to the actin family.</text>
</comment>
<feature type="initiator methionine" description="Removed">
    <location>
        <position position="1"/>
    </location>
</feature>
<feature type="chain" id="PRO_0000442805" description="Actin, alpha skeletal muscle, intermediate form" evidence="2">
    <location>
        <begin position="2"/>
        <end position="377"/>
    </location>
</feature>
<feature type="chain" id="PRO_0000442806" description="Actin, alpha skeletal muscle" evidence="2">
    <location>
        <begin position="3"/>
        <end position="377"/>
    </location>
</feature>
<feature type="region of interest" description="Interaction with alpha-actinin" evidence="4">
    <location>
        <begin position="112"/>
        <end position="125"/>
    </location>
</feature>
<feature type="region of interest" description="Interaction with alpha-actinin" evidence="4">
    <location>
        <begin position="360"/>
        <end position="372"/>
    </location>
</feature>
<feature type="modified residue" description="N-acetylcysteine; in intermediate form" evidence="8">
    <location>
        <position position="2"/>
    </location>
</feature>
<feature type="modified residue" description="Methionine (R)-sulfoxide" evidence="7">
    <location>
        <position position="46"/>
    </location>
</feature>
<feature type="modified residue" description="Methionine (R)-sulfoxide" evidence="7">
    <location>
        <position position="49"/>
    </location>
</feature>
<feature type="modified residue" description="N6-malonyllysine" evidence="1">
    <location>
        <position position="63"/>
    </location>
</feature>
<feature type="modified residue" description="Tele-methylhistidine" evidence="6">
    <location>
        <position position="75"/>
    </location>
</feature>
<feature type="modified residue" description="N6-methyllysine" evidence="3">
    <location>
        <position position="86"/>
    </location>
</feature>
<feature type="strand" evidence="10">
    <location>
        <begin position="10"/>
        <end position="14"/>
    </location>
</feature>
<feature type="strand" evidence="10">
    <location>
        <begin position="16"/>
        <end position="23"/>
    </location>
</feature>
<feature type="strand" evidence="10">
    <location>
        <begin position="26"/>
        <end position="28"/>
    </location>
</feature>
<feature type="strand" evidence="10">
    <location>
        <begin position="30"/>
        <end position="34"/>
    </location>
</feature>
<feature type="strand" evidence="11">
    <location>
        <begin position="37"/>
        <end position="40"/>
    </location>
</feature>
<feature type="strand" evidence="11">
    <location>
        <begin position="49"/>
        <end position="51"/>
    </location>
</feature>
<feature type="strand" evidence="11">
    <location>
        <begin position="53"/>
        <end position="56"/>
    </location>
</feature>
<feature type="helix" evidence="10">
    <location>
        <begin position="57"/>
        <end position="62"/>
    </location>
</feature>
<feature type="turn" evidence="10">
    <location>
        <begin position="63"/>
        <end position="66"/>
    </location>
</feature>
<feature type="strand" evidence="11">
    <location>
        <begin position="67"/>
        <end position="70"/>
    </location>
</feature>
<feature type="strand" evidence="10">
    <location>
        <begin position="72"/>
        <end position="74"/>
    </location>
</feature>
<feature type="helix" evidence="10">
    <location>
        <begin position="81"/>
        <end position="93"/>
    </location>
</feature>
<feature type="helix" evidence="10">
    <location>
        <begin position="100"/>
        <end position="102"/>
    </location>
</feature>
<feature type="strand" evidence="10">
    <location>
        <begin position="105"/>
        <end position="109"/>
    </location>
</feature>
<feature type="helix" evidence="10">
    <location>
        <begin position="115"/>
        <end position="127"/>
    </location>
</feature>
<feature type="strand" evidence="10">
    <location>
        <begin position="132"/>
        <end position="138"/>
    </location>
</feature>
<feature type="helix" evidence="10">
    <location>
        <begin position="139"/>
        <end position="146"/>
    </location>
</feature>
<feature type="strand" evidence="10">
    <location>
        <begin position="150"/>
        <end position="157"/>
    </location>
</feature>
<feature type="strand" evidence="10">
    <location>
        <begin position="162"/>
        <end position="168"/>
    </location>
</feature>
<feature type="helix" evidence="10">
    <location>
        <begin position="174"/>
        <end position="176"/>
    </location>
</feature>
<feature type="strand" evidence="10">
    <location>
        <begin position="178"/>
        <end position="181"/>
    </location>
</feature>
<feature type="helix" evidence="10">
    <location>
        <begin position="184"/>
        <end position="197"/>
    </location>
</feature>
<feature type="helix" evidence="10">
    <location>
        <begin position="205"/>
        <end position="218"/>
    </location>
</feature>
<feature type="helix" evidence="10">
    <location>
        <begin position="225"/>
        <end position="229"/>
    </location>
</feature>
<feature type="strand" evidence="10">
    <location>
        <begin position="240"/>
        <end position="243"/>
    </location>
</feature>
<feature type="strand" evidence="10">
    <location>
        <begin position="249"/>
        <end position="253"/>
    </location>
</feature>
<feature type="helix" evidence="10">
    <location>
        <begin position="255"/>
        <end position="264"/>
    </location>
</feature>
<feature type="helix" evidence="10">
    <location>
        <begin position="266"/>
        <end position="269"/>
    </location>
</feature>
<feature type="helix" evidence="10">
    <location>
        <begin position="276"/>
        <end position="285"/>
    </location>
</feature>
<feature type="helix" evidence="10">
    <location>
        <begin position="289"/>
        <end position="291"/>
    </location>
</feature>
<feature type="helix" evidence="10">
    <location>
        <begin position="292"/>
        <end position="296"/>
    </location>
</feature>
<feature type="strand" evidence="10">
    <location>
        <begin position="299"/>
        <end position="303"/>
    </location>
</feature>
<feature type="helix" evidence="10">
    <location>
        <begin position="304"/>
        <end position="306"/>
    </location>
</feature>
<feature type="helix" evidence="10">
    <location>
        <begin position="311"/>
        <end position="322"/>
    </location>
</feature>
<feature type="helix" evidence="10">
    <location>
        <begin position="337"/>
        <end position="339"/>
    </location>
</feature>
<feature type="helix" evidence="10">
    <location>
        <begin position="340"/>
        <end position="350"/>
    </location>
</feature>
<feature type="helix" evidence="10">
    <location>
        <begin position="352"/>
        <end position="354"/>
    </location>
</feature>
<feature type="turn" evidence="10">
    <location>
        <begin position="355"/>
        <end position="357"/>
    </location>
</feature>
<feature type="strand" evidence="10">
    <location>
        <begin position="358"/>
        <end position="360"/>
    </location>
</feature>
<feature type="helix" evidence="10">
    <location>
        <begin position="361"/>
        <end position="367"/>
    </location>
</feature>
<feature type="helix" evidence="10">
    <location>
        <begin position="368"/>
        <end position="370"/>
    </location>
</feature>
<feature type="helix" evidence="10">
    <location>
        <begin position="371"/>
        <end position="375"/>
    </location>
</feature>
<keyword id="KW-0002">3D-structure</keyword>
<keyword id="KW-0007">Acetylation</keyword>
<keyword id="KW-0067">ATP-binding</keyword>
<keyword id="KW-0963">Cytoplasm</keyword>
<keyword id="KW-0206">Cytoskeleton</keyword>
<keyword id="KW-0378">Hydrolase</keyword>
<keyword id="KW-0488">Methylation</keyword>
<keyword id="KW-0514">Muscle protein</keyword>
<keyword id="KW-0547">Nucleotide-binding</keyword>
<keyword id="KW-0558">Oxidation</keyword>
<keyword id="KW-1185">Reference proteome</keyword>
<proteinExistence type="evidence at protein level"/>
<name>ACTS_MOUSE</name>
<evidence type="ECO:0000250" key="1"/>
<evidence type="ECO:0000250" key="2">
    <source>
        <dbReference type="UniProtKB" id="P62737"/>
    </source>
</evidence>
<evidence type="ECO:0000250" key="3">
    <source>
        <dbReference type="UniProtKB" id="P68133"/>
    </source>
</evidence>
<evidence type="ECO:0000250" key="4">
    <source>
        <dbReference type="UniProtKB" id="P68135"/>
    </source>
</evidence>
<evidence type="ECO:0000250" key="5">
    <source>
        <dbReference type="UniProtKB" id="P68137"/>
    </source>
</evidence>
<evidence type="ECO:0000250" key="6">
    <source>
        <dbReference type="UniProtKB" id="P68138"/>
    </source>
</evidence>
<evidence type="ECO:0000269" key="7">
    <source>
    </source>
</evidence>
<evidence type="ECO:0000269" key="8">
    <source>
    </source>
</evidence>
<evidence type="ECO:0000305" key="9"/>
<evidence type="ECO:0007829" key="10">
    <source>
        <dbReference type="PDB" id="4B1U"/>
    </source>
</evidence>
<evidence type="ECO:0007829" key="11">
    <source>
        <dbReference type="PDB" id="6KLL"/>
    </source>
</evidence>